<evidence type="ECO:0000250" key="1">
    <source>
        <dbReference type="UniProtKB" id="P03416"/>
    </source>
</evidence>
<evidence type="ECO:0000255" key="2">
    <source>
        <dbReference type="HAMAP-Rule" id="MF_04095"/>
    </source>
</evidence>
<evidence type="ECO:0000255" key="3">
    <source>
        <dbReference type="PROSITE-ProRule" id="PRU01276"/>
    </source>
</evidence>
<evidence type="ECO:0000255" key="4">
    <source>
        <dbReference type="PROSITE-ProRule" id="PRU01277"/>
    </source>
</evidence>
<evidence type="ECO:0000256" key="5">
    <source>
        <dbReference type="SAM" id="MobiDB-lite"/>
    </source>
</evidence>
<evidence type="ECO:0000269" key="6">
    <source>
    </source>
</evidence>
<evidence type="ECO:0000269" key="7">
    <source>
    </source>
</evidence>
<organismHost>
    <name type="scientific">Sus scrofa</name>
    <name type="common">Pig</name>
    <dbReference type="NCBI Taxonomy" id="9823"/>
</organismHost>
<comment type="function">
    <text evidence="1 2 6">Packages the positive strand viral genome RNA into a helical ribonucleocapsid (RNP) and plays a fundamental role during virion assembly through its interactions with the viral genome and membrane protein M. Plays an important role in enhancing the efficiency of subgenomic viral RNA transcription as well as viral replication.</text>
</comment>
<comment type="subunit">
    <text evidence="1 2">Homooligomer. Both monomeric and oligomeric forms interact with RNA. Interacts with protein M. Interacts with NSP3; this interaction serves to tether the genome to the newly translated replicase-transcriptase complex at a very early stage of infection.</text>
</comment>
<comment type="subcellular location">
    <subcellularLocation>
        <location evidence="1 2">Virion</location>
    </subcellularLocation>
    <subcellularLocation>
        <location evidence="1 2">Host endoplasmic reticulum-Golgi intermediate compartment</location>
    </subcellularLocation>
    <subcellularLocation>
        <location evidence="1 2">Host Golgi apparatus</location>
    </subcellularLocation>
    <text evidence="1 2">Located inside the virion, complexed with the viral RNA. Probably associates with ER-derived membranes where it participates in viral RNA synthesis and virus budding.</text>
</comment>
<comment type="PTM">
    <text evidence="1 2">ADP-ribosylated. The ADP-ribosylation is retained in the virion during infection.</text>
</comment>
<comment type="PTM">
    <text evidence="1 2 7">Phosphorylated on serine and threonine residues.</text>
</comment>
<comment type="similarity">
    <text evidence="2">Belongs to the alphacoronavirus nucleocapsid protein family.</text>
</comment>
<sequence length="382" mass="43521">MANQGQRVSWGDESTKTRGRSNSRGRKNNNIPLSFFNPITLQQGSKFWNLCPRDFVPKGIGNRDQQIGYWNRQTRYRMVKGQRKELPERWFFYYLGTGPHADAKFKDKLDGVVWVAKDGAMNKPTTLGSRGANNESKALKFDGKVPGEFQLEVNQSRDNSRSRSQSRSRSRNRSQSRGRQQFNNKKDDSVEQAVLAALKKLGVDTEKQQQRSRSKSKERSNSKTRDTTPKNENKHTWKRTAGKGDVTRFYGARSSSANFGDTDLVANGSSAKHYPQLAECVPSVSSILFGSYWTSKEDGDQIEVTFTHKYHLPKDDPKTGQFLQQINAYARPSEVAKEQRKRKSRSKSAERSEQDVVPDALIENYTDVFDDTQVEIIDEVTN</sequence>
<feature type="chain" id="PRO_0000106014" description="Nucleoprotein">
    <location>
        <begin position="1"/>
        <end position="382"/>
    </location>
</feature>
<feature type="domain" description="CoV N NTD" evidence="3">
    <location>
        <begin position="31"/>
        <end position="153"/>
    </location>
</feature>
<feature type="domain" description="CoV N CTD" evidence="4">
    <location>
        <begin position="224"/>
        <end position="337"/>
    </location>
</feature>
<feature type="region of interest" description="Disordered" evidence="5">
    <location>
        <begin position="1"/>
        <end position="29"/>
    </location>
</feature>
<feature type="region of interest" description="RNA-binding" evidence="2">
    <location>
        <begin position="33"/>
        <end position="159"/>
    </location>
</feature>
<feature type="region of interest" description="Disordered" evidence="5">
    <location>
        <begin position="150"/>
        <end position="240"/>
    </location>
</feature>
<feature type="region of interest" description="Dimerization" evidence="2">
    <location>
        <begin position="231"/>
        <end position="334"/>
    </location>
</feature>
<feature type="region of interest" description="Disordered" evidence="5">
    <location>
        <begin position="328"/>
        <end position="358"/>
    </location>
</feature>
<feature type="compositionally biased region" description="Basic residues" evidence="5">
    <location>
        <begin position="17"/>
        <end position="27"/>
    </location>
</feature>
<feature type="compositionally biased region" description="Low complexity" evidence="5">
    <location>
        <begin position="154"/>
        <end position="163"/>
    </location>
</feature>
<feature type="compositionally biased region" description="Basic residues" evidence="5">
    <location>
        <begin position="164"/>
        <end position="176"/>
    </location>
</feature>
<feature type="compositionally biased region" description="Basic and acidic residues" evidence="5">
    <location>
        <begin position="201"/>
        <end position="235"/>
    </location>
</feature>
<feature type="modified residue" description="Phosphoserine; by host" evidence="2 7">
    <location>
        <position position="9"/>
    </location>
</feature>
<feature type="modified residue" description="Phosphoserine; by host" evidence="2 7">
    <location>
        <position position="156"/>
    </location>
</feature>
<feature type="modified residue" description="Phosphoserine; by host" evidence="2 7">
    <location>
        <position position="254"/>
    </location>
</feature>
<feature type="modified residue" description="Phosphoserine; by host" evidence="2 7">
    <location>
        <position position="256"/>
    </location>
</feature>
<feature type="sequence conflict" description="In Ref. 2; AAA47915." ref="2">
    <original>W</original>
    <variation>S</variation>
    <location>
        <position position="237"/>
    </location>
</feature>
<feature type="sequence conflict" description="In Ref. 1; CAA29674." ref="1">
    <original>I</original>
    <variation>N</variation>
    <location>
        <position position="376"/>
    </location>
</feature>
<protein>
    <recommendedName>
        <fullName evidence="2">Nucleoprotein</fullName>
    </recommendedName>
    <alternativeName>
        <fullName evidence="2">Nucleocapsid protein</fullName>
        <shortName evidence="2">NC</shortName>
        <shortName evidence="2">Protein N</shortName>
    </alternativeName>
</protein>
<proteinExistence type="evidence at protein level"/>
<organism>
    <name type="scientific">Porcine transmissible gastroenteritis coronavirus (strain Purdue)</name>
    <name type="common">TGEV</name>
    <dbReference type="NCBI Taxonomy" id="11151"/>
    <lineage>
        <taxon>Viruses</taxon>
        <taxon>Riboviria</taxon>
        <taxon>Orthornavirae</taxon>
        <taxon>Pisuviricota</taxon>
        <taxon>Pisoniviricetes</taxon>
        <taxon>Nidovirales</taxon>
        <taxon>Cornidovirineae</taxon>
        <taxon>Coronaviridae</taxon>
        <taxon>Orthocoronavirinae</taxon>
        <taxon>Alphacoronavirus</taxon>
        <taxon>Tegacovirus</taxon>
        <taxon>Alphacoronavirus 1</taxon>
    </lineage>
</organism>
<gene>
    <name evidence="2" type="primary">N</name>
    <name type="ORF">6</name>
</gene>
<reference key="1">
    <citation type="journal article" date="1987" name="Biochimie">
        <title>Enteric coronavirus TGEV: partial sequence of the genomic RNA, its organization and expression.</title>
        <authorList>
            <person name="Rasschaert D."/>
            <person name="Gelfi J."/>
            <person name="Laude H."/>
        </authorList>
    </citation>
    <scope>NUCLEOTIDE SEQUENCE [GENOMIC RNA]</scope>
</reference>
<reference key="2">
    <citation type="journal article" date="1986" name="Virology">
        <title>Sequence analysis of the porcine transmissible gastroenteritis coronavirus nucleocapsid protein gene.</title>
        <authorList>
            <person name="Kapke P.A."/>
            <person name="Brian D.A."/>
        </authorList>
    </citation>
    <scope>NUCLEOTIDE SEQUENCE [GENOMIC RNA]</scope>
</reference>
<reference key="3">
    <citation type="journal article" date="2000" name="Proc. Natl. Acad. Sci. U.S.A.">
        <title>Engineering the largest RNA virus genome as an infectious bacterial artificial chromosome.</title>
        <authorList>
            <person name="Almazan F."/>
            <person name="Gonzalez J.M."/>
            <person name="Penzes Z."/>
            <person name="Izeta A."/>
            <person name="Calvo E."/>
            <person name="Plana-Duran J."/>
            <person name="Enjuanes L."/>
        </authorList>
    </citation>
    <scope>NUCLEOTIDE SEQUENCE [GENOMIC RNA]</scope>
    <source>
        <strain>Isolate PUR46-MAD</strain>
    </source>
</reference>
<reference key="4">
    <citation type="journal article" date="1988" name="Virology">
        <title>The amino-terminal signal peptide on the porcine transmissible gastroenteritis coronavirus matrix protein is not an absolute requirement for membrane translocation and glycosylation.</title>
        <authorList>
            <person name="Kapke P.A."/>
            <person name="Tung F.Y.T."/>
            <person name="Hogue B.G."/>
            <person name="Brian D.A."/>
            <person name="Woods R.D."/>
            <person name="Wesley R."/>
        </authorList>
    </citation>
    <scope>NUCLEOTIDE SEQUENCE [GENOMIC RNA] OF 1-21</scope>
</reference>
<reference key="5">
    <citation type="journal article" date="1991" name="Virus Res.">
        <title>Expression and cellular localisation of porcine transmissible gastroenteritis virus N and M proteins by recombinant vaccinia viruses.</title>
        <authorList>
            <person name="Pulford D.J."/>
            <person name="Britton P."/>
        </authorList>
    </citation>
    <scope>SUBCELLULAR LOCATION</scope>
</reference>
<reference key="6">
    <citation type="journal article" date="2004" name="J. Virol.">
        <title>The nucleoprotein is required for efficient coronavirus genome replication.</title>
        <authorList>
            <person name="Almazan F."/>
            <person name="Galan C."/>
            <person name="Enjuanes L."/>
        </authorList>
    </citation>
    <scope>FUNCTION</scope>
</reference>
<reference key="7">
    <citation type="journal article" date="2005" name="J. Gen. Virol.">
        <title>Phosphorylation and subcellular localization of transmissible gastroenteritis virus nucleocapsid protein in infected cells.</title>
        <authorList>
            <person name="Calvo E."/>
            <person name="Escors D."/>
            <person name="Lopez J.A."/>
            <person name="Gonzalez J.M."/>
            <person name="Alvarez A."/>
            <person name="Arza E."/>
            <person name="Enjuanes L."/>
        </authorList>
    </citation>
    <scope>PHOSPHORYLATION AT SER-9; SER-156; SER-254 AND SER-256</scope>
    <scope>SUBCELLULAR LOCATION</scope>
    <source>
        <strain>Isolate PUR-C11</strain>
    </source>
</reference>
<name>NCAP_CVPPU</name>
<dbReference type="EMBL" id="X06371">
    <property type="protein sequence ID" value="CAA29674.1"/>
    <property type="molecule type" value="Genomic_RNA"/>
</dbReference>
<dbReference type="EMBL" id="M14878">
    <property type="protein sequence ID" value="AAA47915.1"/>
    <property type="molecule type" value="Genomic_RNA"/>
</dbReference>
<dbReference type="EMBL" id="AJ271965">
    <property type="protein sequence ID" value="CAB91150.1"/>
    <property type="molecule type" value="Genomic_RNA"/>
</dbReference>
<dbReference type="EMBL" id="M21627">
    <property type="protein sequence ID" value="AAA47913.1"/>
    <property type="molecule type" value="Genomic_RNA"/>
</dbReference>
<dbReference type="PIR" id="A04025">
    <property type="entry name" value="VHIHPC"/>
</dbReference>
<dbReference type="SMR" id="P04134"/>
<dbReference type="IntAct" id="P04134">
    <property type="interactions" value="1"/>
</dbReference>
<dbReference type="iPTMnet" id="P04134"/>
<dbReference type="Proteomes" id="UP000001440">
    <property type="component" value="Segment"/>
</dbReference>
<dbReference type="GO" id="GO:0030430">
    <property type="term" value="C:host cell cytoplasm"/>
    <property type="evidence" value="ECO:0000314"/>
    <property type="project" value="UniProtKB"/>
</dbReference>
<dbReference type="GO" id="GO:0044172">
    <property type="term" value="C:host cell endoplasmic reticulum-Golgi intermediate compartment"/>
    <property type="evidence" value="ECO:0007669"/>
    <property type="project" value="UniProtKB-SubCell"/>
</dbReference>
<dbReference type="GO" id="GO:0044177">
    <property type="term" value="C:host cell Golgi apparatus"/>
    <property type="evidence" value="ECO:0007669"/>
    <property type="project" value="UniProtKB-SubCell"/>
</dbReference>
<dbReference type="GO" id="GO:1990904">
    <property type="term" value="C:ribonucleoprotein complex"/>
    <property type="evidence" value="ECO:0007669"/>
    <property type="project" value="UniProtKB-KW"/>
</dbReference>
<dbReference type="GO" id="GO:0019013">
    <property type="term" value="C:viral nucleocapsid"/>
    <property type="evidence" value="ECO:0007669"/>
    <property type="project" value="UniProtKB-KW"/>
</dbReference>
<dbReference type="GO" id="GO:0003723">
    <property type="term" value="F:RNA binding"/>
    <property type="evidence" value="ECO:0007669"/>
    <property type="project" value="UniProtKB-KW"/>
</dbReference>
<dbReference type="CDD" id="cd21595">
    <property type="entry name" value="CoV_N-CTD"/>
    <property type="match status" value="1"/>
</dbReference>
<dbReference type="CDD" id="cd21554">
    <property type="entry name" value="CoV_N-NTD"/>
    <property type="match status" value="1"/>
</dbReference>
<dbReference type="HAMAP" id="MF_04095">
    <property type="entry name" value="ALPHA_CORONA_NCAP"/>
    <property type="match status" value="1"/>
</dbReference>
<dbReference type="InterPro" id="IPR044344">
    <property type="entry name" value="N_prot_C_CoV"/>
</dbReference>
<dbReference type="InterPro" id="IPR044345">
    <property type="entry name" value="N_prot_N_CoV"/>
</dbReference>
<dbReference type="InterPro" id="IPR042548">
    <property type="entry name" value="NCAP_aCoV"/>
</dbReference>
<dbReference type="InterPro" id="IPR001218">
    <property type="entry name" value="Nucleocap_CoV"/>
</dbReference>
<dbReference type="InterPro" id="IPR037179">
    <property type="entry name" value="Nucleocapsid_C"/>
</dbReference>
<dbReference type="InterPro" id="IPR037195">
    <property type="entry name" value="Nucleocapsid_N"/>
</dbReference>
<dbReference type="Pfam" id="PF00937">
    <property type="entry name" value="CoV_nucleocap"/>
    <property type="match status" value="1"/>
</dbReference>
<dbReference type="PIRSF" id="PIRSF003888">
    <property type="entry name" value="Corona_nucleocap"/>
    <property type="match status" value="1"/>
</dbReference>
<dbReference type="SUPFAM" id="SSF110304">
    <property type="entry name" value="Coronavirus RNA-binding domain"/>
    <property type="match status" value="1"/>
</dbReference>
<dbReference type="SUPFAM" id="SSF103068">
    <property type="entry name" value="Nucleocapsid protein dimerization domain"/>
    <property type="match status" value="1"/>
</dbReference>
<dbReference type="PROSITE" id="PS51929">
    <property type="entry name" value="COV_N_CTD"/>
    <property type="match status" value="1"/>
</dbReference>
<dbReference type="PROSITE" id="PS51928">
    <property type="entry name" value="COV_N_NTD"/>
    <property type="match status" value="1"/>
</dbReference>
<accession>P04134</accession>
<accession>Q9IW03</accession>
<keyword id="KW-0013">ADP-ribosylation</keyword>
<keyword id="KW-1040">Host Golgi apparatus</keyword>
<keyword id="KW-0597">Phosphoprotein</keyword>
<keyword id="KW-1185">Reference proteome</keyword>
<keyword id="KW-0687">Ribonucleoprotein</keyword>
<keyword id="KW-0694">RNA-binding</keyword>
<keyword id="KW-0804">Transcription</keyword>
<keyword id="KW-0805">Transcription regulation</keyword>
<keyword id="KW-0543">Viral nucleoprotein</keyword>
<keyword id="KW-0946">Virion</keyword>